<keyword id="KW-0030">Aminoacyl-tRNA synthetase</keyword>
<keyword id="KW-0067">ATP-binding</keyword>
<keyword id="KW-0963">Cytoplasm</keyword>
<keyword id="KW-0436">Ligase</keyword>
<keyword id="KW-0547">Nucleotide-binding</keyword>
<keyword id="KW-0648">Protein biosynthesis</keyword>
<evidence type="ECO:0000255" key="1">
    <source>
        <dbReference type="HAMAP-Rule" id="MF_00044"/>
    </source>
</evidence>
<accession>B0BQ90</accession>
<sequence length="591" mass="66809">MMRSHYCGALNRSHVGQTVTLSGWVHRVRNLGRFIFMQIRDREGIVQVFFDEKDEAIFKIASSLRSEACVQIQGEVIARDESQINKEMATGEIEVLVKNVVVYNNADVLPLDFNQNNTEEQRLKYRYLDLRRPEMAEKLKTRAKITSFVRRYMDDNGFLDIETPMLTKATPEGARDYLVPSRVHNGKFYALPQSPQLFKQLLMMSGFDRYYQIVKCFRDEDLRADRQPEFTQIDVETSFLTAEEVRELMENMIHGLWLDRLNVDLGKFPIMTWQEAMQRFGSDKPDLRNPLELVDVADILKDVEFKVFNEPANSADGRVTVLRVPNGASLTRKQIDEYTQFVGIYGAKGLAWAKINNVNAGMEGIQSPVAKFLNEEVFKALIERTNATSGDILFFGADKWQVVTDSMGALRLKVGRDLALTDLSAWKPLWVIDFPMFEKDDEGNLSAMHHPFTSPKNLTPEELAANPVNAVANAYDMVINGYEVGGGSVRIYDPKMQQTVFGILGINEQDQQEKFGFLLDALKFGTPPHAGLAFGLDRLTMLITGTENIRDVIAFPKTTAAACLMTEAPSFANPQALEELGIAVLKKEKAE</sequence>
<protein>
    <recommendedName>
        <fullName evidence="1">Aspartate--tRNA ligase</fullName>
        <ecNumber evidence="1">6.1.1.12</ecNumber>
    </recommendedName>
    <alternativeName>
        <fullName evidence="1">Aspartyl-tRNA synthetase</fullName>
        <shortName evidence="1">AspRS</shortName>
    </alternativeName>
</protein>
<feature type="chain" id="PRO_1000090953" description="Aspartate--tRNA ligase">
    <location>
        <begin position="1"/>
        <end position="591"/>
    </location>
</feature>
<feature type="region of interest" description="Aspartate" evidence="1">
    <location>
        <begin position="196"/>
        <end position="199"/>
    </location>
</feature>
<feature type="binding site" evidence="1">
    <location>
        <position position="172"/>
    </location>
    <ligand>
        <name>L-aspartate</name>
        <dbReference type="ChEBI" id="CHEBI:29991"/>
    </ligand>
</feature>
<feature type="binding site" evidence="1">
    <location>
        <begin position="218"/>
        <end position="220"/>
    </location>
    <ligand>
        <name>ATP</name>
        <dbReference type="ChEBI" id="CHEBI:30616"/>
    </ligand>
</feature>
<feature type="binding site" evidence="1">
    <location>
        <position position="218"/>
    </location>
    <ligand>
        <name>L-aspartate</name>
        <dbReference type="ChEBI" id="CHEBI:29991"/>
    </ligand>
</feature>
<feature type="binding site" evidence="1">
    <location>
        <position position="227"/>
    </location>
    <ligand>
        <name>ATP</name>
        <dbReference type="ChEBI" id="CHEBI:30616"/>
    </ligand>
</feature>
<feature type="binding site" evidence="1">
    <location>
        <position position="449"/>
    </location>
    <ligand>
        <name>L-aspartate</name>
        <dbReference type="ChEBI" id="CHEBI:29991"/>
    </ligand>
</feature>
<feature type="binding site" evidence="1">
    <location>
        <position position="483"/>
    </location>
    <ligand>
        <name>ATP</name>
        <dbReference type="ChEBI" id="CHEBI:30616"/>
    </ligand>
</feature>
<feature type="binding site" evidence="1">
    <location>
        <position position="490"/>
    </location>
    <ligand>
        <name>L-aspartate</name>
        <dbReference type="ChEBI" id="CHEBI:29991"/>
    </ligand>
</feature>
<feature type="binding site" evidence="1">
    <location>
        <begin position="535"/>
        <end position="538"/>
    </location>
    <ligand>
        <name>ATP</name>
        <dbReference type="ChEBI" id="CHEBI:30616"/>
    </ligand>
</feature>
<reference key="1">
    <citation type="journal article" date="2008" name="PLoS ONE">
        <title>Genome biology of Actinobacillus pleuropneumoniae JL03, an isolate of serotype 3 prevalent in China.</title>
        <authorList>
            <person name="Xu Z."/>
            <person name="Zhou Y."/>
            <person name="Li L."/>
            <person name="Zhou R."/>
            <person name="Xiao S."/>
            <person name="Wan Y."/>
            <person name="Zhang S."/>
            <person name="Wang K."/>
            <person name="Li W."/>
            <person name="Li L."/>
            <person name="Jin H."/>
            <person name="Kang M."/>
            <person name="Dalai B."/>
            <person name="Li T."/>
            <person name="Liu L."/>
            <person name="Cheng Y."/>
            <person name="Zhang L."/>
            <person name="Xu T."/>
            <person name="Zheng H."/>
            <person name="Pu S."/>
            <person name="Wang B."/>
            <person name="Gu W."/>
            <person name="Zhang X.L."/>
            <person name="Zhu G.-F."/>
            <person name="Wang S."/>
            <person name="Zhao G.-P."/>
            <person name="Chen H."/>
        </authorList>
    </citation>
    <scope>NUCLEOTIDE SEQUENCE [LARGE SCALE GENOMIC DNA]</scope>
    <source>
        <strain>JL03</strain>
    </source>
</reference>
<dbReference type="EC" id="6.1.1.12" evidence="1"/>
<dbReference type="EMBL" id="CP000687">
    <property type="protein sequence ID" value="ABY69725.1"/>
    <property type="molecule type" value="Genomic_DNA"/>
</dbReference>
<dbReference type="RefSeq" id="WP_005598050.1">
    <property type="nucleotide sequence ID" value="NC_010278.1"/>
</dbReference>
<dbReference type="SMR" id="B0BQ90"/>
<dbReference type="GeneID" id="48599385"/>
<dbReference type="KEGG" id="apj:APJL_1169"/>
<dbReference type="HOGENOM" id="CLU_014330_3_2_6"/>
<dbReference type="Proteomes" id="UP000008547">
    <property type="component" value="Chromosome"/>
</dbReference>
<dbReference type="GO" id="GO:0005737">
    <property type="term" value="C:cytoplasm"/>
    <property type="evidence" value="ECO:0007669"/>
    <property type="project" value="UniProtKB-SubCell"/>
</dbReference>
<dbReference type="GO" id="GO:0004815">
    <property type="term" value="F:aspartate-tRNA ligase activity"/>
    <property type="evidence" value="ECO:0007669"/>
    <property type="project" value="UniProtKB-UniRule"/>
</dbReference>
<dbReference type="GO" id="GO:0005524">
    <property type="term" value="F:ATP binding"/>
    <property type="evidence" value="ECO:0007669"/>
    <property type="project" value="UniProtKB-UniRule"/>
</dbReference>
<dbReference type="GO" id="GO:0003676">
    <property type="term" value="F:nucleic acid binding"/>
    <property type="evidence" value="ECO:0007669"/>
    <property type="project" value="InterPro"/>
</dbReference>
<dbReference type="GO" id="GO:0006422">
    <property type="term" value="P:aspartyl-tRNA aminoacylation"/>
    <property type="evidence" value="ECO:0007669"/>
    <property type="project" value="UniProtKB-UniRule"/>
</dbReference>
<dbReference type="CDD" id="cd00777">
    <property type="entry name" value="AspRS_core"/>
    <property type="match status" value="1"/>
</dbReference>
<dbReference type="CDD" id="cd04317">
    <property type="entry name" value="EcAspRS_like_N"/>
    <property type="match status" value="1"/>
</dbReference>
<dbReference type="Gene3D" id="3.30.930.10">
    <property type="entry name" value="Bira Bifunctional Protein, Domain 2"/>
    <property type="match status" value="1"/>
</dbReference>
<dbReference type="Gene3D" id="3.30.1360.30">
    <property type="entry name" value="GAD-like domain"/>
    <property type="match status" value="1"/>
</dbReference>
<dbReference type="Gene3D" id="2.40.50.140">
    <property type="entry name" value="Nucleic acid-binding proteins"/>
    <property type="match status" value="1"/>
</dbReference>
<dbReference type="HAMAP" id="MF_00044">
    <property type="entry name" value="Asp_tRNA_synth_type1"/>
    <property type="match status" value="1"/>
</dbReference>
<dbReference type="InterPro" id="IPR004364">
    <property type="entry name" value="Aa-tRNA-synt_II"/>
</dbReference>
<dbReference type="InterPro" id="IPR006195">
    <property type="entry name" value="aa-tRNA-synth_II"/>
</dbReference>
<dbReference type="InterPro" id="IPR045864">
    <property type="entry name" value="aa-tRNA-synth_II/BPL/LPL"/>
</dbReference>
<dbReference type="InterPro" id="IPR004524">
    <property type="entry name" value="Asp-tRNA-ligase_1"/>
</dbReference>
<dbReference type="InterPro" id="IPR047089">
    <property type="entry name" value="Asp-tRNA-ligase_1_N"/>
</dbReference>
<dbReference type="InterPro" id="IPR002312">
    <property type="entry name" value="Asp/Asn-tRNA-synth_IIb"/>
</dbReference>
<dbReference type="InterPro" id="IPR047090">
    <property type="entry name" value="AspRS_core"/>
</dbReference>
<dbReference type="InterPro" id="IPR004115">
    <property type="entry name" value="GAD-like_sf"/>
</dbReference>
<dbReference type="InterPro" id="IPR029351">
    <property type="entry name" value="GAD_dom"/>
</dbReference>
<dbReference type="InterPro" id="IPR012340">
    <property type="entry name" value="NA-bd_OB-fold"/>
</dbReference>
<dbReference type="InterPro" id="IPR004365">
    <property type="entry name" value="NA-bd_OB_tRNA"/>
</dbReference>
<dbReference type="NCBIfam" id="TIGR00459">
    <property type="entry name" value="aspS_bact"/>
    <property type="match status" value="1"/>
</dbReference>
<dbReference type="NCBIfam" id="NF001750">
    <property type="entry name" value="PRK00476.1"/>
    <property type="match status" value="1"/>
</dbReference>
<dbReference type="PANTHER" id="PTHR22594:SF5">
    <property type="entry name" value="ASPARTATE--TRNA LIGASE, MITOCHONDRIAL"/>
    <property type="match status" value="1"/>
</dbReference>
<dbReference type="PANTHER" id="PTHR22594">
    <property type="entry name" value="ASPARTYL/LYSYL-TRNA SYNTHETASE"/>
    <property type="match status" value="1"/>
</dbReference>
<dbReference type="Pfam" id="PF02938">
    <property type="entry name" value="GAD"/>
    <property type="match status" value="1"/>
</dbReference>
<dbReference type="Pfam" id="PF00152">
    <property type="entry name" value="tRNA-synt_2"/>
    <property type="match status" value="1"/>
</dbReference>
<dbReference type="Pfam" id="PF01336">
    <property type="entry name" value="tRNA_anti-codon"/>
    <property type="match status" value="1"/>
</dbReference>
<dbReference type="PRINTS" id="PR01042">
    <property type="entry name" value="TRNASYNTHASP"/>
</dbReference>
<dbReference type="SUPFAM" id="SSF55681">
    <property type="entry name" value="Class II aaRS and biotin synthetases"/>
    <property type="match status" value="1"/>
</dbReference>
<dbReference type="SUPFAM" id="SSF55261">
    <property type="entry name" value="GAD domain-like"/>
    <property type="match status" value="1"/>
</dbReference>
<dbReference type="SUPFAM" id="SSF50249">
    <property type="entry name" value="Nucleic acid-binding proteins"/>
    <property type="match status" value="1"/>
</dbReference>
<dbReference type="PROSITE" id="PS50862">
    <property type="entry name" value="AA_TRNA_LIGASE_II"/>
    <property type="match status" value="1"/>
</dbReference>
<name>SYD_ACTPJ</name>
<gene>
    <name evidence="1" type="primary">aspS</name>
    <name type="ordered locus">APJL_1169</name>
</gene>
<comment type="function">
    <text evidence="1">Catalyzes the attachment of L-aspartate to tRNA(Asp) in a two-step reaction: L-aspartate is first activated by ATP to form Asp-AMP and then transferred to the acceptor end of tRNA(Asp).</text>
</comment>
<comment type="catalytic activity">
    <reaction evidence="1">
        <text>tRNA(Asp) + L-aspartate + ATP = L-aspartyl-tRNA(Asp) + AMP + diphosphate</text>
        <dbReference type="Rhea" id="RHEA:19649"/>
        <dbReference type="Rhea" id="RHEA-COMP:9660"/>
        <dbReference type="Rhea" id="RHEA-COMP:9678"/>
        <dbReference type="ChEBI" id="CHEBI:29991"/>
        <dbReference type="ChEBI" id="CHEBI:30616"/>
        <dbReference type="ChEBI" id="CHEBI:33019"/>
        <dbReference type="ChEBI" id="CHEBI:78442"/>
        <dbReference type="ChEBI" id="CHEBI:78516"/>
        <dbReference type="ChEBI" id="CHEBI:456215"/>
        <dbReference type="EC" id="6.1.1.12"/>
    </reaction>
</comment>
<comment type="subunit">
    <text evidence="1">Homodimer.</text>
</comment>
<comment type="subcellular location">
    <subcellularLocation>
        <location evidence="1">Cytoplasm</location>
    </subcellularLocation>
</comment>
<comment type="similarity">
    <text evidence="1">Belongs to the class-II aminoacyl-tRNA synthetase family. Type 1 subfamily.</text>
</comment>
<proteinExistence type="inferred from homology"/>
<organism>
    <name type="scientific">Actinobacillus pleuropneumoniae serotype 3 (strain JL03)</name>
    <dbReference type="NCBI Taxonomy" id="434271"/>
    <lineage>
        <taxon>Bacteria</taxon>
        <taxon>Pseudomonadati</taxon>
        <taxon>Pseudomonadota</taxon>
        <taxon>Gammaproteobacteria</taxon>
        <taxon>Pasteurellales</taxon>
        <taxon>Pasteurellaceae</taxon>
        <taxon>Actinobacillus</taxon>
    </lineage>
</organism>